<accession>Q73R11</accession>
<keyword id="KW-0067">ATP-binding</keyword>
<keyword id="KW-0997">Cell inner membrane</keyword>
<keyword id="KW-1003">Cell membrane</keyword>
<keyword id="KW-0472">Membrane</keyword>
<keyword id="KW-0547">Nucleotide-binding</keyword>
<keyword id="KW-1185">Reference proteome</keyword>
<keyword id="KW-0677">Repeat</keyword>
<keyword id="KW-1278">Translocase</keyword>
<keyword id="KW-0813">Transport</keyword>
<comment type="function">
    <text evidence="1">Probably part of an ABC transporter complex. Responsible for energy coupling to the transport system (By similarity).</text>
</comment>
<comment type="subcellular location">
    <subcellularLocation>
        <location evidence="1">Cell inner membrane</location>
        <topology evidence="1">Peripheral membrane protein</topology>
    </subcellularLocation>
</comment>
<comment type="similarity">
    <text evidence="3">Belongs to the ABC transporter superfamily.</text>
</comment>
<gene>
    <name type="ordered locus">TDE_0282</name>
</gene>
<sequence>MITLRNISFSYNGTKENNLCDISLHIPKGQCVLLCGASGCGKTTLTRLINGLIPHFFEGEFSGEAIINGMNSEEADIAQLSDSVGTVFQNPRTQFFNTDTDSEIVFGLENRGLPPEQLLSRLEKVTEDLQIQNLRERSIFELSGGEKQKIAFASVYAAAPDIFVLDEPSSNMDYHSIKELSELIKKIKLQGKTIIIAEHRIWYLMDIADRVIFMENGKIAHDMDIKTFVDLPEAQIKSMKLRCRNLADVKAETVNVSPDVSVSFGGHTFAVKDITVKLGHTSVLQDISFSTTGGEIIAITGENGAGKTTLARTLCGLTQEAAGSISFDGNPLSRKMRRERSYMVMQDVGHQLFTDSVYAECRLGIKDLPDPAIDEVLTELSLNRLKERHPLSLSGGQKQRLAVAVSVLCGKDILIFDEPTSGLDLKSMQEAGRIIKRLADDKKTVIVITHDIEFIKTICSRVLILSGGKIVKELCGEKKNELEMQLETF</sequence>
<reference key="1">
    <citation type="journal article" date="2004" name="Proc. Natl. Acad. Sci. U.S.A.">
        <title>Comparison of the genome of the oral pathogen Treponema denticola with other spirochete genomes.</title>
        <authorList>
            <person name="Seshadri R."/>
            <person name="Myers G.S.A."/>
            <person name="Tettelin H."/>
            <person name="Eisen J.A."/>
            <person name="Heidelberg J.F."/>
            <person name="Dodson R.J."/>
            <person name="Davidsen T.M."/>
            <person name="DeBoy R.T."/>
            <person name="Fouts D.E."/>
            <person name="Haft D.H."/>
            <person name="Selengut J."/>
            <person name="Ren Q."/>
            <person name="Brinkac L.M."/>
            <person name="Madupu R."/>
            <person name="Kolonay J.F."/>
            <person name="Durkin S.A."/>
            <person name="Daugherty S.C."/>
            <person name="Shetty J."/>
            <person name="Shvartsbeyn A."/>
            <person name="Gebregeorgis E."/>
            <person name="Geer K."/>
            <person name="Tsegaye G."/>
            <person name="Malek J.A."/>
            <person name="Ayodeji B."/>
            <person name="Shatsman S."/>
            <person name="McLeod M.P."/>
            <person name="Smajs D."/>
            <person name="Howell J.K."/>
            <person name="Pal S."/>
            <person name="Amin A."/>
            <person name="Vashisth P."/>
            <person name="McNeill T.Z."/>
            <person name="Xiang Q."/>
            <person name="Sodergren E."/>
            <person name="Baca E."/>
            <person name="Weinstock G.M."/>
            <person name="Norris S.J."/>
            <person name="Fraser C.M."/>
            <person name="Paulsen I.T."/>
        </authorList>
    </citation>
    <scope>NUCLEOTIDE SEQUENCE [LARGE SCALE GENOMIC DNA]</scope>
    <source>
        <strain>ATCC 35405 / DSM 14222 / CIP 103919 / JCM 8153 / KCTC 15104</strain>
    </source>
</reference>
<dbReference type="EC" id="7.-.-.-"/>
<dbReference type="EMBL" id="AE017226">
    <property type="protein sequence ID" value="AAS10777.1"/>
    <property type="molecule type" value="Genomic_DNA"/>
</dbReference>
<dbReference type="RefSeq" id="NP_970896.1">
    <property type="nucleotide sequence ID" value="NC_002967.9"/>
</dbReference>
<dbReference type="RefSeq" id="WP_002681219.1">
    <property type="nucleotide sequence ID" value="NC_002967.9"/>
</dbReference>
<dbReference type="SMR" id="Q73R11"/>
<dbReference type="STRING" id="243275.TDE_0282"/>
<dbReference type="PaxDb" id="243275-TDE_0282"/>
<dbReference type="GeneID" id="2741599"/>
<dbReference type="KEGG" id="tde:TDE_0282"/>
<dbReference type="PATRIC" id="fig|243275.7.peg.272"/>
<dbReference type="eggNOG" id="COG1129">
    <property type="taxonomic scope" value="Bacteria"/>
</dbReference>
<dbReference type="HOGENOM" id="CLU_000604_86_7_12"/>
<dbReference type="OrthoDB" id="9805565at2"/>
<dbReference type="Proteomes" id="UP000008212">
    <property type="component" value="Chromosome"/>
</dbReference>
<dbReference type="GO" id="GO:0043190">
    <property type="term" value="C:ATP-binding cassette (ABC) transporter complex"/>
    <property type="evidence" value="ECO:0007669"/>
    <property type="project" value="TreeGrafter"/>
</dbReference>
<dbReference type="GO" id="GO:0005524">
    <property type="term" value="F:ATP binding"/>
    <property type="evidence" value="ECO:0007669"/>
    <property type="project" value="UniProtKB-KW"/>
</dbReference>
<dbReference type="GO" id="GO:0016887">
    <property type="term" value="F:ATP hydrolysis activity"/>
    <property type="evidence" value="ECO:0007669"/>
    <property type="project" value="InterPro"/>
</dbReference>
<dbReference type="GO" id="GO:0042626">
    <property type="term" value="F:ATPase-coupled transmembrane transporter activity"/>
    <property type="evidence" value="ECO:0007669"/>
    <property type="project" value="TreeGrafter"/>
</dbReference>
<dbReference type="CDD" id="cd03225">
    <property type="entry name" value="ABC_cobalt_CbiO_domain1"/>
    <property type="match status" value="1"/>
</dbReference>
<dbReference type="CDD" id="cd03226">
    <property type="entry name" value="ABC_cobalt_CbiO_domain2"/>
    <property type="match status" value="1"/>
</dbReference>
<dbReference type="FunFam" id="3.40.50.300:FF:000224">
    <property type="entry name" value="Energy-coupling factor transporter ATP-binding protein EcfA"/>
    <property type="match status" value="1"/>
</dbReference>
<dbReference type="Gene3D" id="3.40.50.300">
    <property type="entry name" value="P-loop containing nucleotide triphosphate hydrolases"/>
    <property type="match status" value="2"/>
</dbReference>
<dbReference type="InterPro" id="IPR003593">
    <property type="entry name" value="AAA+_ATPase"/>
</dbReference>
<dbReference type="InterPro" id="IPR003439">
    <property type="entry name" value="ABC_transporter-like_ATP-bd"/>
</dbReference>
<dbReference type="InterPro" id="IPR017871">
    <property type="entry name" value="ABC_transporter-like_CS"/>
</dbReference>
<dbReference type="InterPro" id="IPR015856">
    <property type="entry name" value="ABC_transpr_CbiO/EcfA_su"/>
</dbReference>
<dbReference type="InterPro" id="IPR050095">
    <property type="entry name" value="ECF_ABC_transporter_ATP-bd"/>
</dbReference>
<dbReference type="InterPro" id="IPR027417">
    <property type="entry name" value="P-loop_NTPase"/>
</dbReference>
<dbReference type="PANTHER" id="PTHR43553:SF23">
    <property type="entry name" value="ABC TRANSPORTER ATP-BINDING COMPONENT"/>
    <property type="match status" value="1"/>
</dbReference>
<dbReference type="PANTHER" id="PTHR43553">
    <property type="entry name" value="HEAVY METAL TRANSPORTER"/>
    <property type="match status" value="1"/>
</dbReference>
<dbReference type="Pfam" id="PF00005">
    <property type="entry name" value="ABC_tran"/>
    <property type="match status" value="2"/>
</dbReference>
<dbReference type="SMART" id="SM00382">
    <property type="entry name" value="AAA"/>
    <property type="match status" value="2"/>
</dbReference>
<dbReference type="SUPFAM" id="SSF52540">
    <property type="entry name" value="P-loop containing nucleoside triphosphate hydrolases"/>
    <property type="match status" value="2"/>
</dbReference>
<dbReference type="PROSITE" id="PS00211">
    <property type="entry name" value="ABC_TRANSPORTER_1"/>
    <property type="match status" value="2"/>
</dbReference>
<dbReference type="PROSITE" id="PS50893">
    <property type="entry name" value="ABC_TRANSPORTER_2"/>
    <property type="match status" value="2"/>
</dbReference>
<feature type="chain" id="PRO_0000092121" description="Putative ABC transporter ATP-binding protein TDE_0282">
    <location>
        <begin position="1"/>
        <end position="489"/>
    </location>
</feature>
<feature type="domain" description="ABC transporter 1" evidence="2">
    <location>
        <begin position="2"/>
        <end position="241"/>
    </location>
</feature>
<feature type="domain" description="ABC transporter 2" evidence="2">
    <location>
        <begin position="269"/>
        <end position="487"/>
    </location>
</feature>
<feature type="binding site" evidence="2">
    <location>
        <begin position="36"/>
        <end position="43"/>
    </location>
    <ligand>
        <name>ATP</name>
        <dbReference type="ChEBI" id="CHEBI:30616"/>
        <label>1</label>
    </ligand>
</feature>
<feature type="binding site" evidence="2">
    <location>
        <begin position="301"/>
        <end position="308"/>
    </location>
    <ligand>
        <name>ATP</name>
        <dbReference type="ChEBI" id="CHEBI:30616"/>
        <label>2</label>
    </ligand>
</feature>
<proteinExistence type="inferred from homology"/>
<name>Y282_TREDE</name>
<protein>
    <recommendedName>
        <fullName>Putative ABC transporter ATP-binding protein TDE_0282</fullName>
        <ecNumber>7.-.-.-</ecNumber>
    </recommendedName>
</protein>
<organism>
    <name type="scientific">Treponema denticola (strain ATCC 35405 / DSM 14222 / CIP 103919 / JCM 8153 / KCTC 15104)</name>
    <dbReference type="NCBI Taxonomy" id="243275"/>
    <lineage>
        <taxon>Bacteria</taxon>
        <taxon>Pseudomonadati</taxon>
        <taxon>Spirochaetota</taxon>
        <taxon>Spirochaetia</taxon>
        <taxon>Spirochaetales</taxon>
        <taxon>Treponemataceae</taxon>
        <taxon>Treponema</taxon>
    </lineage>
</organism>
<evidence type="ECO:0000250" key="1"/>
<evidence type="ECO:0000255" key="2">
    <source>
        <dbReference type="PROSITE-ProRule" id="PRU00434"/>
    </source>
</evidence>
<evidence type="ECO:0000305" key="3"/>